<feature type="chain" id="PRO_1000069323" description="Carboxy-S-adenosyl-L-methionine synthase">
    <location>
        <begin position="1"/>
        <end position="247"/>
    </location>
</feature>
<feature type="binding site" evidence="1">
    <location>
        <position position="40"/>
    </location>
    <ligand>
        <name>S-adenosyl-L-methionine</name>
        <dbReference type="ChEBI" id="CHEBI:59789"/>
    </ligand>
</feature>
<feature type="binding site" evidence="1">
    <location>
        <begin position="65"/>
        <end position="67"/>
    </location>
    <ligand>
        <name>S-adenosyl-L-methionine</name>
        <dbReference type="ChEBI" id="CHEBI:59789"/>
    </ligand>
</feature>
<feature type="binding site" evidence="1">
    <location>
        <begin position="90"/>
        <end position="91"/>
    </location>
    <ligand>
        <name>S-adenosyl-L-methionine</name>
        <dbReference type="ChEBI" id="CHEBI:59789"/>
    </ligand>
</feature>
<feature type="binding site" evidence="1">
    <location>
        <begin position="122"/>
        <end position="123"/>
    </location>
    <ligand>
        <name>S-adenosyl-L-methionine</name>
        <dbReference type="ChEBI" id="CHEBI:59789"/>
    </ligand>
</feature>
<feature type="binding site" evidence="1">
    <location>
        <position position="137"/>
    </location>
    <ligand>
        <name>S-adenosyl-L-methionine</name>
        <dbReference type="ChEBI" id="CHEBI:59789"/>
    </ligand>
</feature>
<feature type="binding site" evidence="1">
    <location>
        <position position="204"/>
    </location>
    <ligand>
        <name>S-adenosyl-L-methionine</name>
        <dbReference type="ChEBI" id="CHEBI:59789"/>
    </ligand>
</feature>
<sequence length="247" mass="27596">MSQEPDRLFAQPLAEVPDFVFNEDVVRVFPDMIKRSVPGYPTIVENIGVLAGQFAQPHTTLYDLGASLGAVTQALRRHVRIDGCKVIAVDNSPAMVARCSEYLHAQDAMFQELLPVEVIEADILALDLQPTSLVTLNFTLQFIPPERRLELLTRIRQALLPGGALILSEKLRFEDAAEHELLTELHVAFKRANGYSELEIAQKRSAIEKVMLPDSLEQHRERLLAAGFSKVVPWFQCLNFASLVALP</sequence>
<organism>
    <name type="scientific">Ectopseudomonas mendocina (strain ymp)</name>
    <name type="common">Pseudomonas mendocina</name>
    <dbReference type="NCBI Taxonomy" id="399739"/>
    <lineage>
        <taxon>Bacteria</taxon>
        <taxon>Pseudomonadati</taxon>
        <taxon>Pseudomonadota</taxon>
        <taxon>Gammaproteobacteria</taxon>
        <taxon>Pseudomonadales</taxon>
        <taxon>Pseudomonadaceae</taxon>
        <taxon>Ectopseudomonas</taxon>
    </lineage>
</organism>
<keyword id="KW-0949">S-adenosyl-L-methionine</keyword>
<keyword id="KW-0808">Transferase</keyword>
<gene>
    <name evidence="1" type="primary">cmoA</name>
    <name type="ordered locus">Pmen_1482</name>
</gene>
<dbReference type="EC" id="2.1.3.-" evidence="1"/>
<dbReference type="EMBL" id="CP000680">
    <property type="protein sequence ID" value="ABP84247.1"/>
    <property type="molecule type" value="Genomic_DNA"/>
</dbReference>
<dbReference type="SMR" id="A4XSD1"/>
<dbReference type="STRING" id="399739.Pmen_1482"/>
<dbReference type="KEGG" id="pmy:Pmen_1482"/>
<dbReference type="PATRIC" id="fig|399739.8.peg.1504"/>
<dbReference type="eggNOG" id="COG4106">
    <property type="taxonomic scope" value="Bacteria"/>
</dbReference>
<dbReference type="HOGENOM" id="CLU_078475_0_0_6"/>
<dbReference type="OrthoDB" id="9779941at2"/>
<dbReference type="GO" id="GO:0016743">
    <property type="term" value="F:carboxyl- or carbamoyltransferase activity"/>
    <property type="evidence" value="ECO:0007669"/>
    <property type="project" value="UniProtKB-UniRule"/>
</dbReference>
<dbReference type="GO" id="GO:1904047">
    <property type="term" value="F:S-adenosyl-L-methionine binding"/>
    <property type="evidence" value="ECO:0007669"/>
    <property type="project" value="UniProtKB-UniRule"/>
</dbReference>
<dbReference type="GO" id="GO:0002098">
    <property type="term" value="P:tRNA wobble uridine modification"/>
    <property type="evidence" value="ECO:0007669"/>
    <property type="project" value="InterPro"/>
</dbReference>
<dbReference type="CDD" id="cd02440">
    <property type="entry name" value="AdoMet_MTases"/>
    <property type="match status" value="1"/>
</dbReference>
<dbReference type="Gene3D" id="3.40.50.150">
    <property type="entry name" value="Vaccinia Virus protein VP39"/>
    <property type="match status" value="1"/>
</dbReference>
<dbReference type="HAMAP" id="MF_01589">
    <property type="entry name" value="Cx_SAM_synthase"/>
    <property type="match status" value="1"/>
</dbReference>
<dbReference type="InterPro" id="IPR005271">
    <property type="entry name" value="CmoA"/>
</dbReference>
<dbReference type="InterPro" id="IPR041698">
    <property type="entry name" value="Methyltransf_25"/>
</dbReference>
<dbReference type="InterPro" id="IPR029063">
    <property type="entry name" value="SAM-dependent_MTases_sf"/>
</dbReference>
<dbReference type="NCBIfam" id="TIGR00740">
    <property type="entry name" value="carboxy-S-adenosyl-L-methionine synthase CmoA"/>
    <property type="match status" value="1"/>
</dbReference>
<dbReference type="NCBIfam" id="NF011995">
    <property type="entry name" value="PRK15451.1"/>
    <property type="match status" value="1"/>
</dbReference>
<dbReference type="PANTHER" id="PTHR43861:SF2">
    <property type="entry name" value="CARBOXY-S-ADENOSYL-L-METHIONINE SYNTHASE"/>
    <property type="match status" value="1"/>
</dbReference>
<dbReference type="PANTHER" id="PTHR43861">
    <property type="entry name" value="TRANS-ACONITATE 2-METHYLTRANSFERASE-RELATED"/>
    <property type="match status" value="1"/>
</dbReference>
<dbReference type="Pfam" id="PF13649">
    <property type="entry name" value="Methyltransf_25"/>
    <property type="match status" value="1"/>
</dbReference>
<dbReference type="PIRSF" id="PIRSF006325">
    <property type="entry name" value="MeTrfase_bac"/>
    <property type="match status" value="1"/>
</dbReference>
<dbReference type="SUPFAM" id="SSF53335">
    <property type="entry name" value="S-adenosyl-L-methionine-dependent methyltransferases"/>
    <property type="match status" value="1"/>
</dbReference>
<reference key="1">
    <citation type="submission" date="2007-04" db="EMBL/GenBank/DDBJ databases">
        <title>Complete sequence of Pseudomonas mendocina ymp.</title>
        <authorList>
            <consortium name="US DOE Joint Genome Institute"/>
            <person name="Copeland A."/>
            <person name="Lucas S."/>
            <person name="Lapidus A."/>
            <person name="Barry K."/>
            <person name="Glavina del Rio T."/>
            <person name="Dalin E."/>
            <person name="Tice H."/>
            <person name="Pitluck S."/>
            <person name="Kiss H."/>
            <person name="Brettin T."/>
            <person name="Detter J.C."/>
            <person name="Bruce D."/>
            <person name="Han C."/>
            <person name="Schmutz J."/>
            <person name="Larimer F."/>
            <person name="Land M."/>
            <person name="Hauser L."/>
            <person name="Kyrpides N."/>
            <person name="Mikhailova N."/>
            <person name="Hersman L."/>
            <person name="Dubois J."/>
            <person name="Maurice P."/>
            <person name="Richardson P."/>
        </authorList>
    </citation>
    <scope>NUCLEOTIDE SEQUENCE [LARGE SCALE GENOMIC DNA]</scope>
    <source>
        <strain>ymp</strain>
    </source>
</reference>
<proteinExistence type="inferred from homology"/>
<name>CMOA_ECTM1</name>
<evidence type="ECO:0000255" key="1">
    <source>
        <dbReference type="HAMAP-Rule" id="MF_01589"/>
    </source>
</evidence>
<protein>
    <recommendedName>
        <fullName evidence="1">Carboxy-S-adenosyl-L-methionine synthase</fullName>
        <shortName evidence="1">Cx-SAM synthase</shortName>
        <ecNumber evidence="1">2.1.3.-</ecNumber>
    </recommendedName>
</protein>
<comment type="function">
    <text evidence="1">Catalyzes the conversion of S-adenosyl-L-methionine (SAM) to carboxy-S-adenosyl-L-methionine (Cx-SAM).</text>
</comment>
<comment type="catalytic activity">
    <reaction evidence="1">
        <text>prephenate + S-adenosyl-L-methionine = carboxy-S-adenosyl-L-methionine + 3-phenylpyruvate + H2O</text>
        <dbReference type="Rhea" id="RHEA:51692"/>
        <dbReference type="ChEBI" id="CHEBI:15377"/>
        <dbReference type="ChEBI" id="CHEBI:18005"/>
        <dbReference type="ChEBI" id="CHEBI:29934"/>
        <dbReference type="ChEBI" id="CHEBI:59789"/>
        <dbReference type="ChEBI" id="CHEBI:134278"/>
    </reaction>
</comment>
<comment type="subunit">
    <text evidence="1">Homodimer.</text>
</comment>
<comment type="similarity">
    <text evidence="1">Belongs to the class I-like SAM-binding methyltransferase superfamily. Cx-SAM synthase family.</text>
</comment>
<accession>A4XSD1</accession>